<protein>
    <recommendedName>
        <fullName>Phosphatidylethanolamine-binding protein 1</fullName>
        <shortName>PEBP-1</shortName>
    </recommendedName>
    <alternativeName>
        <fullName>23 kDa morphine-binding protein</fullName>
    </alternativeName>
    <alternativeName>
        <fullName>HCNPpp</fullName>
    </alternativeName>
    <alternativeName>
        <fullName>P23K</fullName>
    </alternativeName>
    <component>
        <recommendedName>
            <fullName>Hippocampal cholinergic neurostimulating peptide</fullName>
            <shortName>HCNP</shortName>
        </recommendedName>
    </component>
</protein>
<comment type="function">
    <text evidence="1">Binds ATP, opioids and phosphatidylethanolamine. Has lower affinity for phosphatidylinositol and phosphatidylcholine. Serine protease inhibitor which inhibits thrombin, neuropsin and chymotrypsin but not trypsin, tissue type plasminogen activator and elastase (By similarity). Inhibits the kinase activity of RAF1 by inhibiting its activation and by dissociating the RAF1/MEK complex and acting as a competitive inhibitor of MEK phosphorylation (By similarity).</text>
</comment>
<comment type="function">
    <text>HCNP may be involved in the function of the presynaptic cholinergic neurons of the central nervous system. HCNP increases the production of choline acetyltransferase but not acetylcholinesterase. Seems to be mediated by a specific receptor.</text>
</comment>
<comment type="subunit">
    <text evidence="1">Has a tendency to form dimers by disulfide cross-linking. Interacts with RAF1 and this interaction is enhanced if RAF1 is phosphorylated on residues 'Ser-338', 'Ser-339', 'Tyr-340' and 'Tyr-341'. Interacts with ALOX15; in response to IL13/interleukin-13, prevents the interaction of PEBP1 with RAF1 to activate the ERK signaling cascade (By similarity).</text>
</comment>
<comment type="subcellular location">
    <subcellularLocation>
        <location>Cytoplasm</location>
    </subcellularLocation>
    <subcellularLocation>
        <location>Membrane</location>
        <topology>Peripheral membrane protein</topology>
    </subcellularLocation>
</comment>
<comment type="tissue specificity">
    <text>Major component of epididymal secretions and sperm plasma membranes. It is present in cytosols from a variety of other tissues. Highly expressed in brain.</text>
</comment>
<comment type="miscellaneous">
    <text>Seems to be associated with memory and learning disorder.</text>
</comment>
<comment type="similarity">
    <text evidence="4">Belongs to the phosphatidylethanolamine-binding protein family.</text>
</comment>
<name>PEBP1_RAT</name>
<evidence type="ECO:0000250" key="1"/>
<evidence type="ECO:0000250" key="2">
    <source>
        <dbReference type="UniProtKB" id="P30086"/>
    </source>
</evidence>
<evidence type="ECO:0000269" key="3">
    <source>
    </source>
</evidence>
<evidence type="ECO:0000305" key="4"/>
<evidence type="ECO:0007744" key="5">
    <source>
    </source>
</evidence>
<evidence type="ECO:0007829" key="6">
    <source>
        <dbReference type="PDB" id="2IQX"/>
    </source>
</evidence>
<evidence type="ECO:0007829" key="7">
    <source>
        <dbReference type="PDB" id="2IQY"/>
    </source>
</evidence>
<sequence>MAADISQWAGPLSLQEVDEPPQHALRVDYGGVTVDELGKVLTPTQVMNRPSSISWDGLDPGKLYTLVLTDPDAPSRKDPKFREWHHFLVVNMKGNDISSGTVLSEYVGSGPPKDTGLHRYVWLVYEQEQPLNCDEPILSNKSGDNRGKFKVESFRKKYHLGAPVAGTCFQAEWDDSVPKLHDQLAGK</sequence>
<reference key="1">
    <citation type="journal article" date="1990" name="Mol. Endocrinol.">
        <title>Purification, cloning, and tissue distribution of a 23-kDa rat protein isolated by morphine affinity chromatography.</title>
        <authorList>
            <person name="Grandy D.K."/>
            <person name="Hanneman E."/>
            <person name="Bunzow J."/>
            <person name="Shih M."/>
            <person name="Machida C.A."/>
            <person name="Bidlack J.M."/>
            <person name="Civelli O."/>
        </authorList>
    </citation>
    <scope>NUCLEOTIDE SEQUENCE [MRNA]</scope>
    <scope>PARTIAL PROTEIN SEQUENCE</scope>
    <source>
        <strain>Sprague-Dawley</strain>
        <tissue>Brain</tissue>
    </source>
</reference>
<reference key="2">
    <citation type="journal article" date="1995" name="Brain Res. Mol. Brain Res.">
        <title>Sequence homology of rat and human HCNP precursor proteins, bovine phosphatidylethanolamine-binding protein and rat 23-kDa protein associated with the opioid-binding protein.</title>
        <authorList>
            <person name="Tohdoh N."/>
            <person name="Tojo S."/>
            <person name="Agui H."/>
            <person name="Ojika K."/>
        </authorList>
    </citation>
    <scope>NUCLEOTIDE SEQUENCE [GENOMIC DNA / MRNA]</scope>
    <source>
        <strain>Wistar</strain>
        <tissue>Hippocampus</tissue>
    </source>
</reference>
<reference key="3">
    <citation type="journal article" date="1994" name="Biochem. J.">
        <title>Sequence analysis of a mammalian phospholipid-binding protein from testis and epididymis and its distribution between spermatozoa and extracellular secretions.</title>
        <authorList>
            <person name="Perry A.C.F."/>
            <person name="Hall L."/>
            <person name="Bell A.E."/>
            <person name="Jones R."/>
        </authorList>
    </citation>
    <scope>NUCLEOTIDE SEQUENCE [MRNA]</scope>
    <source>
        <strain>Wistar</strain>
        <tissue>Epididymis</tissue>
        <tissue>Liver</tissue>
    </source>
</reference>
<reference key="4">
    <citation type="journal article" date="2004" name="Genome Res.">
        <title>The status, quality, and expansion of the NIH full-length cDNA project: the Mammalian Gene Collection (MGC).</title>
        <authorList>
            <consortium name="The MGC Project Team"/>
        </authorList>
    </citation>
    <scope>NUCLEOTIDE SEQUENCE [LARGE SCALE MRNA]</scope>
    <source>
        <tissue>Pituitary</tissue>
    </source>
</reference>
<reference key="5">
    <citation type="journal article" date="1992" name="Brain Res.">
        <title>Purification and structural analysis of hippocampal cholinergic neurostimulating peptide.</title>
        <authorList>
            <person name="Ojika K."/>
            <person name="Kojima S."/>
            <person name="Ueki Y."/>
            <person name="Fukushima N."/>
            <person name="Hayashi K."/>
            <person name="Yamamoto M."/>
        </authorList>
    </citation>
    <scope>PROTEIN SEQUENCE OF 2-12</scope>
    <scope>ACETYLATION AT ALA-2</scope>
</reference>
<reference key="6">
    <citation type="submission" date="2007-07" db="UniProtKB">
        <authorList>
            <person name="Lubec G."/>
            <person name="Diao W."/>
            <person name="Afjehi-Sadat L."/>
            <person name="Kang S.U."/>
        </authorList>
    </citation>
    <scope>PROTEIN SEQUENCE OF 27-62; 63-76; 81-113 AND 158-179</scope>
    <scope>IDENTIFICATION BY MASS SPECTROMETRY</scope>
    <source>
        <strain>Sprague-Dawley</strain>
        <tissue>Brain</tissue>
        <tissue>Hippocampus</tissue>
        <tissue>Spinal cord</tissue>
    </source>
</reference>
<reference key="7">
    <citation type="journal article" date="1991" name="Biochim. Biophys. Acta">
        <title>A 23 kDa protein from rat sperm plasma membranes shows sequence similarity and phospholipid binding properties to a bovine brain cytosolic protein.</title>
        <authorList>
            <person name="Jones R."/>
            <person name="Hall L."/>
        </authorList>
    </citation>
    <scope>PROTEIN SEQUENCE OF 40-56 AND 93-112</scope>
    <source>
        <tissue>Sperm</tissue>
    </source>
</reference>
<reference key="8">
    <citation type="journal article" date="2000" name="Prog. Neurobiol.">
        <title>Hippocampal cholinergic neurostimulating peptides (HCNP).</title>
        <authorList>
            <person name="Ojika K."/>
            <person name="Mitake S."/>
            <person name="Tohdoh N."/>
            <person name="Appel S.H."/>
            <person name="Otsuka Y."/>
            <person name="Katada E."/>
            <person name="Matsukawa N."/>
        </authorList>
    </citation>
    <scope>CHARACTERIZATION</scope>
</reference>
<reference key="9">
    <citation type="journal article" date="2003" name="Brain Res.">
        <title>Specific binding of 125I-hippocampal cholinergic neurostimulating peptide (HCNP) to rat brain membranes: characterization and regional distribution.</title>
        <authorList>
            <person name="Morishita M."/>
            <person name="Otsuka Y."/>
            <person name="Matsukawa N."/>
            <person name="Suzuki H."/>
            <person name="Nakazawa H."/>
            <person name="Maki M."/>
            <person name="Katou H."/>
            <person name="Ueda R."/>
            <person name="Ojika K."/>
        </authorList>
    </citation>
    <scope>CHARACTERIZATION</scope>
</reference>
<reference key="10">
    <citation type="journal article" date="2012" name="Nat. Commun.">
        <title>Quantitative maps of protein phosphorylation sites across 14 different rat organs and tissues.</title>
        <authorList>
            <person name="Lundby A."/>
            <person name="Secher A."/>
            <person name="Lage K."/>
            <person name="Nordsborg N.B."/>
            <person name="Dmytriyev A."/>
            <person name="Lundby C."/>
            <person name="Olsen J.V."/>
        </authorList>
    </citation>
    <scope>PHOSPHORYLATION [LARGE SCALE ANALYSIS] AT SER-13; SER-52 AND SER-54</scope>
    <scope>IDENTIFICATION BY MASS SPECTROMETRY [LARGE SCALE ANALYSIS]</scope>
</reference>
<gene>
    <name type="primary">Pebp1</name>
    <name type="synonym">Pbp</name>
    <name type="synonym">Pebp</name>
</gene>
<organism>
    <name type="scientific">Rattus norvegicus</name>
    <name type="common">Rat</name>
    <dbReference type="NCBI Taxonomy" id="10116"/>
    <lineage>
        <taxon>Eukaryota</taxon>
        <taxon>Metazoa</taxon>
        <taxon>Chordata</taxon>
        <taxon>Craniata</taxon>
        <taxon>Vertebrata</taxon>
        <taxon>Euteleostomi</taxon>
        <taxon>Mammalia</taxon>
        <taxon>Eutheria</taxon>
        <taxon>Euarchontoglires</taxon>
        <taxon>Glires</taxon>
        <taxon>Rodentia</taxon>
        <taxon>Myomorpha</taxon>
        <taxon>Muroidea</taxon>
        <taxon>Muridae</taxon>
        <taxon>Murinae</taxon>
        <taxon>Rattus</taxon>
    </lineage>
</organism>
<keyword id="KW-0002">3D-structure</keyword>
<keyword id="KW-0007">Acetylation</keyword>
<keyword id="KW-0067">ATP-binding</keyword>
<keyword id="KW-0963">Cytoplasm</keyword>
<keyword id="KW-0903">Direct protein sequencing</keyword>
<keyword id="KW-1015">Disulfide bond</keyword>
<keyword id="KW-0446">Lipid-binding</keyword>
<keyword id="KW-0472">Membrane</keyword>
<keyword id="KW-0547">Nucleotide-binding</keyword>
<keyword id="KW-0597">Phosphoprotein</keyword>
<keyword id="KW-0646">Protease inhibitor</keyword>
<keyword id="KW-1185">Reference proteome</keyword>
<keyword id="KW-0722">Serine protease inhibitor</keyword>
<accession>P31044</accession>
<accession>P31045</accession>
<dbReference type="EMBL" id="X75253">
    <property type="protein sequence ID" value="CAA53032.1"/>
    <property type="molecule type" value="mRNA"/>
</dbReference>
<dbReference type="EMBL" id="X75254">
    <property type="protein sequence ID" value="CAA53033.1"/>
    <property type="molecule type" value="Genomic_DNA"/>
</dbReference>
<dbReference type="EMBL" id="X71873">
    <property type="protein sequence ID" value="CAA50708.1"/>
    <property type="molecule type" value="mRNA"/>
</dbReference>
<dbReference type="EMBL" id="BC063171">
    <property type="protein sequence ID" value="AAH63171.1"/>
    <property type="molecule type" value="mRNA"/>
</dbReference>
<dbReference type="PIR" id="A36126">
    <property type="entry name" value="A36126"/>
</dbReference>
<dbReference type="PIR" id="S18358">
    <property type="entry name" value="S18358"/>
</dbReference>
<dbReference type="RefSeq" id="NP_058932.1">
    <property type="nucleotide sequence ID" value="NM_017236.3"/>
</dbReference>
<dbReference type="RefSeq" id="XP_063127304.1">
    <property type="nucleotide sequence ID" value="XM_063271234.1"/>
</dbReference>
<dbReference type="PDB" id="2IQX">
    <property type="method" value="X-ray"/>
    <property type="resolution" value="2.20 A"/>
    <property type="chains" value="A/B/C=1-187"/>
</dbReference>
<dbReference type="PDB" id="2IQY">
    <property type="method" value="X-ray"/>
    <property type="resolution" value="1.40 A"/>
    <property type="chains" value="A=1-187"/>
</dbReference>
<dbReference type="PDB" id="6ENT">
    <property type="method" value="X-ray"/>
    <property type="resolution" value="2.66 A"/>
    <property type="chains" value="A=2-187"/>
</dbReference>
<dbReference type="PDBsum" id="2IQX"/>
<dbReference type="PDBsum" id="2IQY"/>
<dbReference type="PDBsum" id="6ENT"/>
<dbReference type="BMRB" id="P31044"/>
<dbReference type="SMR" id="P31044"/>
<dbReference type="BioGRID" id="248176">
    <property type="interactions" value="11"/>
</dbReference>
<dbReference type="FunCoup" id="P31044">
    <property type="interactions" value="115"/>
</dbReference>
<dbReference type="STRING" id="10116.ENSRNOP00000001500"/>
<dbReference type="MEROPS" id="I51.002"/>
<dbReference type="GlyGen" id="P31044">
    <property type="glycosylation" value="1 site, 1 O-linked glycan (1 site)"/>
</dbReference>
<dbReference type="iPTMnet" id="P31044"/>
<dbReference type="PhosphoSitePlus" id="P31044"/>
<dbReference type="jPOST" id="P31044"/>
<dbReference type="PaxDb" id="10116-ENSRNOP00000001500"/>
<dbReference type="GeneID" id="29542"/>
<dbReference type="KEGG" id="rno:29542"/>
<dbReference type="UCSC" id="RGD:62017">
    <property type="organism name" value="rat"/>
</dbReference>
<dbReference type="AGR" id="RGD:62017"/>
<dbReference type="CTD" id="5037"/>
<dbReference type="RGD" id="62017">
    <property type="gene designation" value="Pebp1"/>
</dbReference>
<dbReference type="VEuPathDB" id="HostDB:ENSRNOG00000001136"/>
<dbReference type="eggNOG" id="KOG3346">
    <property type="taxonomic scope" value="Eukaryota"/>
</dbReference>
<dbReference type="HOGENOM" id="CLU_043994_5_0_1"/>
<dbReference type="InParanoid" id="P31044"/>
<dbReference type="OrthoDB" id="206at9989"/>
<dbReference type="PhylomeDB" id="P31044"/>
<dbReference type="TreeFam" id="TF315074"/>
<dbReference type="Reactome" id="R-RNO-5674135">
    <property type="pathway name" value="MAP2K and MAPK activation"/>
</dbReference>
<dbReference type="Reactome" id="R-RNO-5675221">
    <property type="pathway name" value="Negative regulation of MAPK pathway"/>
</dbReference>
<dbReference type="EvolutionaryTrace" id="P31044"/>
<dbReference type="PRO" id="PR:P31044"/>
<dbReference type="Proteomes" id="UP000002494">
    <property type="component" value="Chromosome 12"/>
</dbReference>
<dbReference type="Bgee" id="ENSRNOG00000001136">
    <property type="expression patterns" value="Expressed in testis and 20 other cell types or tissues"/>
</dbReference>
<dbReference type="GO" id="GO:0045177">
    <property type="term" value="C:apical part of cell"/>
    <property type="evidence" value="ECO:0000314"/>
    <property type="project" value="RGD"/>
</dbReference>
<dbReference type="GO" id="GO:0043679">
    <property type="term" value="C:axon terminus"/>
    <property type="evidence" value="ECO:0000314"/>
    <property type="project" value="RGD"/>
</dbReference>
<dbReference type="GO" id="GO:0009986">
    <property type="term" value="C:cell surface"/>
    <property type="evidence" value="ECO:0000314"/>
    <property type="project" value="RGD"/>
</dbReference>
<dbReference type="GO" id="GO:0005615">
    <property type="term" value="C:extracellular space"/>
    <property type="evidence" value="ECO:0000314"/>
    <property type="project" value="RGD"/>
</dbReference>
<dbReference type="GO" id="GO:0005741">
    <property type="term" value="C:mitochondrial outer membrane"/>
    <property type="evidence" value="ECO:0000314"/>
    <property type="project" value="RGD"/>
</dbReference>
<dbReference type="GO" id="GO:0043025">
    <property type="term" value="C:neuronal cell body"/>
    <property type="evidence" value="ECO:0000314"/>
    <property type="project" value="RGD"/>
</dbReference>
<dbReference type="GO" id="GO:0008021">
    <property type="term" value="C:synaptic vesicle"/>
    <property type="evidence" value="ECO:0000314"/>
    <property type="project" value="RGD"/>
</dbReference>
<dbReference type="GO" id="GO:0005524">
    <property type="term" value="F:ATP binding"/>
    <property type="evidence" value="ECO:0000314"/>
    <property type="project" value="RGD"/>
</dbReference>
<dbReference type="GO" id="GO:0019899">
    <property type="term" value="F:enzyme binding"/>
    <property type="evidence" value="ECO:0000266"/>
    <property type="project" value="RGD"/>
</dbReference>
<dbReference type="GO" id="GO:0019900">
    <property type="term" value="F:kinase binding"/>
    <property type="evidence" value="ECO:0000353"/>
    <property type="project" value="RGD"/>
</dbReference>
<dbReference type="GO" id="GO:0008289">
    <property type="term" value="F:lipid binding"/>
    <property type="evidence" value="ECO:0000304"/>
    <property type="project" value="RGD"/>
</dbReference>
<dbReference type="GO" id="GO:0051019">
    <property type="term" value="F:mitogen-activated protein kinase binding"/>
    <property type="evidence" value="ECO:0000314"/>
    <property type="project" value="RGD"/>
</dbReference>
<dbReference type="GO" id="GO:0019901">
    <property type="term" value="F:protein kinase binding"/>
    <property type="evidence" value="ECO:0000353"/>
    <property type="project" value="RGD"/>
</dbReference>
<dbReference type="GO" id="GO:0033612">
    <property type="term" value="F:receptor serine/threonine kinase binding"/>
    <property type="evidence" value="ECO:0000353"/>
    <property type="project" value="RGD"/>
</dbReference>
<dbReference type="GO" id="GO:0004867">
    <property type="term" value="F:serine-type endopeptidase inhibitor activity"/>
    <property type="evidence" value="ECO:0007669"/>
    <property type="project" value="UniProtKB-KW"/>
</dbReference>
<dbReference type="GO" id="GO:0005102">
    <property type="term" value="F:signaling receptor binding"/>
    <property type="evidence" value="ECO:0000314"/>
    <property type="project" value="RGD"/>
</dbReference>
<dbReference type="GO" id="GO:0042755">
    <property type="term" value="P:eating behavior"/>
    <property type="evidence" value="ECO:0000270"/>
    <property type="project" value="RGD"/>
</dbReference>
<dbReference type="GO" id="GO:0021766">
    <property type="term" value="P:hippocampus development"/>
    <property type="evidence" value="ECO:0000270"/>
    <property type="project" value="RGD"/>
</dbReference>
<dbReference type="GO" id="GO:0000165">
    <property type="term" value="P:MAPK cascade"/>
    <property type="evidence" value="ECO:0000314"/>
    <property type="project" value="RGD"/>
</dbReference>
<dbReference type="GO" id="GO:0043409">
    <property type="term" value="P:negative regulation of MAPK cascade"/>
    <property type="evidence" value="ECO:0000315"/>
    <property type="project" value="RGD"/>
</dbReference>
<dbReference type="GO" id="GO:1905923">
    <property type="term" value="P:positive regulation of acetylcholine biosynthetic process"/>
    <property type="evidence" value="ECO:0000314"/>
    <property type="project" value="RGD"/>
</dbReference>
<dbReference type="GO" id="GO:0060409">
    <property type="term" value="P:positive regulation of acetylcholine metabolic process"/>
    <property type="evidence" value="ECO:0000314"/>
    <property type="project" value="RGD"/>
</dbReference>
<dbReference type="GO" id="GO:0141163">
    <property type="term" value="P:positive regulation of cAMP/PKA signal transduction"/>
    <property type="evidence" value="ECO:0000315"/>
    <property type="project" value="RGD"/>
</dbReference>
<dbReference type="GO" id="GO:0045840">
    <property type="term" value="P:positive regulation of mitotic nuclear division"/>
    <property type="evidence" value="ECO:0000315"/>
    <property type="project" value="RGD"/>
</dbReference>
<dbReference type="GO" id="GO:0002026">
    <property type="term" value="P:regulation of the force of heart contraction"/>
    <property type="evidence" value="ECO:0000314"/>
    <property type="project" value="RGD"/>
</dbReference>
<dbReference type="GO" id="GO:0014823">
    <property type="term" value="P:response to activity"/>
    <property type="evidence" value="ECO:0000270"/>
    <property type="project" value="RGD"/>
</dbReference>
<dbReference type="GO" id="GO:0051592">
    <property type="term" value="P:response to calcium ion"/>
    <property type="evidence" value="ECO:0000270"/>
    <property type="project" value="RGD"/>
</dbReference>
<dbReference type="GO" id="GO:0051591">
    <property type="term" value="P:response to cAMP"/>
    <property type="evidence" value="ECO:0000270"/>
    <property type="project" value="RGD"/>
</dbReference>
<dbReference type="GO" id="GO:0051412">
    <property type="term" value="P:response to corticosterone"/>
    <property type="evidence" value="ECO:0000270"/>
    <property type="project" value="RGD"/>
</dbReference>
<dbReference type="GO" id="GO:0051602">
    <property type="term" value="P:response to electrical stimulus"/>
    <property type="evidence" value="ECO:0000270"/>
    <property type="project" value="RGD"/>
</dbReference>
<dbReference type="GO" id="GO:0045471">
    <property type="term" value="P:response to ethanol"/>
    <property type="evidence" value="ECO:0000270"/>
    <property type="project" value="RGD"/>
</dbReference>
<dbReference type="GO" id="GO:0006979">
    <property type="term" value="P:response to oxidative stress"/>
    <property type="evidence" value="ECO:0000270"/>
    <property type="project" value="RGD"/>
</dbReference>
<dbReference type="GO" id="GO:0009636">
    <property type="term" value="P:response to toxic substance"/>
    <property type="evidence" value="ECO:0000270"/>
    <property type="project" value="RGD"/>
</dbReference>
<dbReference type="GO" id="GO:0009410">
    <property type="term" value="P:response to xenobiotic stimulus"/>
    <property type="evidence" value="ECO:0000270"/>
    <property type="project" value="RGD"/>
</dbReference>
<dbReference type="GO" id="GO:0048240">
    <property type="term" value="P:sperm capacitation"/>
    <property type="evidence" value="ECO:0000266"/>
    <property type="project" value="RGD"/>
</dbReference>
<dbReference type="GO" id="GO:0007286">
    <property type="term" value="P:spermatid development"/>
    <property type="evidence" value="ECO:0000270"/>
    <property type="project" value="RGD"/>
</dbReference>
<dbReference type="CDD" id="cd00866">
    <property type="entry name" value="PEBP_euk"/>
    <property type="match status" value="1"/>
</dbReference>
<dbReference type="FunFam" id="3.90.280.10:FF:000003">
    <property type="entry name" value="phosphatidylethanolamine-binding protein 1"/>
    <property type="match status" value="1"/>
</dbReference>
<dbReference type="Gene3D" id="3.90.280.10">
    <property type="entry name" value="PEBP-like"/>
    <property type="match status" value="1"/>
</dbReference>
<dbReference type="InterPro" id="IPR008914">
    <property type="entry name" value="PEBP"/>
</dbReference>
<dbReference type="InterPro" id="IPR036610">
    <property type="entry name" value="PEBP-like_sf"/>
</dbReference>
<dbReference type="InterPro" id="IPR035810">
    <property type="entry name" value="PEBP_euk"/>
</dbReference>
<dbReference type="InterPro" id="IPR001858">
    <property type="entry name" value="Phosphatidylethanolamine-bd_CS"/>
</dbReference>
<dbReference type="PANTHER" id="PTHR11362">
    <property type="entry name" value="PHOSPHATIDYLETHANOLAMINE-BINDING PROTEIN"/>
    <property type="match status" value="1"/>
</dbReference>
<dbReference type="PANTHER" id="PTHR11362:SF151">
    <property type="entry name" value="PHOSPHATIDYLETHANOLAMINE-BINDING PROTEIN 1"/>
    <property type="match status" value="1"/>
</dbReference>
<dbReference type="Pfam" id="PF01161">
    <property type="entry name" value="PBP"/>
    <property type="match status" value="1"/>
</dbReference>
<dbReference type="SUPFAM" id="SSF49777">
    <property type="entry name" value="PEBP-like"/>
    <property type="match status" value="1"/>
</dbReference>
<dbReference type="PROSITE" id="PS01220">
    <property type="entry name" value="PBP"/>
    <property type="match status" value="1"/>
</dbReference>
<proteinExistence type="evidence at protein level"/>
<feature type="initiator methionine" description="Removed" evidence="3">
    <location>
        <position position="1"/>
    </location>
</feature>
<feature type="chain" id="PRO_0000023277" description="Phosphatidylethanolamine-binding protein 1">
    <location>
        <begin position="2"/>
        <end position="187"/>
    </location>
</feature>
<feature type="peptide" id="PRO_0000023278" description="Hippocampal cholinergic neurostimulating peptide" evidence="1">
    <location>
        <begin position="2"/>
        <end position="12"/>
    </location>
</feature>
<feature type="region of interest" description="Interaction with RAF1" evidence="1">
    <location>
        <begin position="93"/>
        <end position="134"/>
    </location>
</feature>
<feature type="modified residue" description="N-acetylalanine; in peptide hippocampal cholinergic neurostimulating" evidence="3">
    <location>
        <position position="2"/>
    </location>
</feature>
<feature type="modified residue" description="Phosphoserine" evidence="2">
    <location>
        <position position="6"/>
    </location>
</feature>
<feature type="modified residue" description="Phosphoserine" evidence="5">
    <location>
        <position position="13"/>
    </location>
</feature>
<feature type="modified residue" description="Phosphothreonine" evidence="2">
    <location>
        <position position="42"/>
    </location>
</feature>
<feature type="modified residue" description="Phosphoserine" evidence="5">
    <location>
        <position position="52"/>
    </location>
</feature>
<feature type="modified residue" description="Phosphoserine" evidence="5">
    <location>
        <position position="54"/>
    </location>
</feature>
<feature type="modified residue" description="Phosphoserine" evidence="2">
    <location>
        <position position="98"/>
    </location>
</feature>
<feature type="modified residue" description="Phosphoserine" evidence="2">
    <location>
        <position position="153"/>
    </location>
</feature>
<feature type="sequence conflict" description="In Ref. 7; AA sequence." evidence="4" ref="7">
    <original>R</original>
    <variation>G</variation>
    <location>
        <position position="49"/>
    </location>
</feature>
<feature type="sequence conflict" description="In Ref. 7; AA sequence." evidence="4" ref="7">
    <original>SW</original>
    <variation>TA</variation>
    <location>
        <begin position="54"/>
        <end position="55"/>
    </location>
</feature>
<feature type="helix" evidence="7">
    <location>
        <begin position="5"/>
        <end position="7"/>
    </location>
</feature>
<feature type="helix" evidence="7">
    <location>
        <begin position="14"/>
        <end position="16"/>
    </location>
</feature>
<feature type="strand" evidence="7">
    <location>
        <begin position="22"/>
        <end position="24"/>
    </location>
</feature>
<feature type="strand" evidence="7">
    <location>
        <begin position="26"/>
        <end position="28"/>
    </location>
</feature>
<feature type="strand" evidence="6">
    <location>
        <begin position="32"/>
        <end position="34"/>
    </location>
</feature>
<feature type="helix" evidence="7">
    <location>
        <begin position="43"/>
        <end position="46"/>
    </location>
</feature>
<feature type="strand" evidence="7">
    <location>
        <begin position="51"/>
        <end position="54"/>
    </location>
</feature>
<feature type="strand" evidence="7">
    <location>
        <begin position="62"/>
        <end position="74"/>
    </location>
</feature>
<feature type="strand" evidence="7">
    <location>
        <begin position="76"/>
        <end position="78"/>
    </location>
</feature>
<feature type="strand" evidence="7">
    <location>
        <begin position="84"/>
        <end position="93"/>
    </location>
</feature>
<feature type="helix" evidence="7">
    <location>
        <begin position="97"/>
        <end position="99"/>
    </location>
</feature>
<feature type="strand" evidence="7">
    <location>
        <begin position="100"/>
        <end position="104"/>
    </location>
</feature>
<feature type="strand" evidence="7">
    <location>
        <begin position="118"/>
        <end position="126"/>
    </location>
</feature>
<feature type="helix" evidence="7">
    <location>
        <begin position="151"/>
        <end position="157"/>
    </location>
</feature>
<feature type="strand" evidence="7">
    <location>
        <begin position="164"/>
        <end position="171"/>
    </location>
</feature>
<feature type="helix" evidence="7">
    <location>
        <begin position="177"/>
        <end position="184"/>
    </location>
</feature>